<keyword id="KW-0158">Chromosome</keyword>
<keyword id="KW-0217">Developmental protein</keyword>
<keyword id="KW-0221">Differentiation</keyword>
<keyword id="KW-0903">Direct protein sequencing</keyword>
<keyword id="KW-1015">Disulfide bond</keyword>
<keyword id="KW-0226">DNA condensation</keyword>
<keyword id="KW-0238">DNA-binding</keyword>
<keyword id="KW-0544">Nucleosome core</keyword>
<keyword id="KW-0539">Nucleus</keyword>
<keyword id="KW-0597">Phosphoprotein</keyword>
<keyword id="KW-1185">Reference proteome</keyword>
<keyword id="KW-0744">Spermatogenesis</keyword>
<evidence type="ECO:0000250" key="1">
    <source>
        <dbReference type="UniProtKB" id="P02318"/>
    </source>
</evidence>
<evidence type="ECO:0000256" key="2">
    <source>
        <dbReference type="SAM" id="MobiDB-lite"/>
    </source>
</evidence>
<evidence type="ECO:0000269" key="3">
    <source>
    </source>
</evidence>
<evidence type="ECO:0000269" key="4">
    <source>
    </source>
</evidence>
<evidence type="ECO:0000269" key="5">
    <source>
    </source>
</evidence>
<evidence type="ECO:0000305" key="6"/>
<organism>
    <name type="scientific">Homo sapiens</name>
    <name type="common">Human</name>
    <dbReference type="NCBI Taxonomy" id="9606"/>
    <lineage>
        <taxon>Eukaryota</taxon>
        <taxon>Metazoa</taxon>
        <taxon>Chordata</taxon>
        <taxon>Craniata</taxon>
        <taxon>Vertebrata</taxon>
        <taxon>Euteleostomi</taxon>
        <taxon>Mammalia</taxon>
        <taxon>Eutheria</taxon>
        <taxon>Euarchontoglires</taxon>
        <taxon>Primates</taxon>
        <taxon>Haplorrhini</taxon>
        <taxon>Catarrhini</taxon>
        <taxon>Hominidae</taxon>
        <taxon>Homo</taxon>
    </lineage>
</organism>
<sequence>MARYRCCRSQSRSRYYRQRQRSRRRRRRSCQTRRRAMRCCRPRYRPRCRRH</sequence>
<name>HSP1_HUMAN</name>
<feature type="initiator methionine" description="Removed" evidence="4 5">
    <location>
        <position position="1"/>
    </location>
</feature>
<feature type="chain" id="PRO_0000191482" description="Sperm protamine P1" evidence="4 5">
    <location>
        <begin position="2"/>
        <end position="51"/>
    </location>
</feature>
<feature type="region of interest" description="Disordered" evidence="2">
    <location>
        <begin position="1"/>
        <end position="30"/>
    </location>
</feature>
<feature type="compositionally biased region" description="Low complexity" evidence="2">
    <location>
        <begin position="1"/>
        <end position="13"/>
    </location>
</feature>
<feature type="compositionally biased region" description="Basic residues" evidence="2">
    <location>
        <begin position="14"/>
        <end position="30"/>
    </location>
</feature>
<feature type="disulfide bond" description="Interchain" evidence="1">
    <location>
        <position position="6"/>
    </location>
</feature>
<feature type="disulfide bond" description="Interchain (with C-39)" evidence="1">
    <location>
        <position position="39"/>
    </location>
</feature>
<feature type="disulfide bond" evidence="1">
    <location>
        <begin position="40"/>
        <end position="48"/>
    </location>
</feature>
<proteinExistence type="evidence at protein level"/>
<gene>
    <name type="primary">PRM1</name>
</gene>
<protein>
    <recommendedName>
        <fullName>Sperm protamine P1</fullName>
    </recommendedName>
    <alternativeName>
        <fullName>Cysteine-rich protamine</fullName>
    </alternativeName>
</protein>
<comment type="function">
    <text>Protamines substitute for histones in the chromatin of sperm during the haploid phase of spermatogenesis. They compact sperm DNA into a highly condensed, stable and inactive complex.</text>
</comment>
<comment type="subunit">
    <text>Cross-linked by interchain disulfide bonds around the DNA-helix.</text>
</comment>
<comment type="interaction">
    <interactant intactId="EBI-13066730">
        <id>P04553</id>
    </interactant>
    <interactant intactId="EBI-750020">
        <id>P49760</id>
        <label>CLK2</label>
    </interactant>
    <organismsDiffer>false</organismsDiffer>
    <experiments>3</experiments>
</comment>
<comment type="subcellular location">
    <subcellularLocation>
        <location>Nucleus</location>
    </subcellularLocation>
    <subcellularLocation>
        <location>Chromosome</location>
    </subcellularLocation>
</comment>
<comment type="tissue specificity">
    <text>Testis.</text>
</comment>
<comment type="PTM">
    <text evidence="3">Phosphorylated by SRPK1.</text>
</comment>
<comment type="similarity">
    <text evidence="6">Belongs to the protamine P1 family.</text>
</comment>
<accession>P04553</accession>
<reference key="1">
    <citation type="journal article" date="1990" name="Genomics">
        <title>Genomic sequences of human protamines whose genes, PRM1 and PRM2, are clustered.</title>
        <authorList>
            <person name="Domenjoud L."/>
            <person name="Nussbaum G."/>
            <person name="Adham I.M."/>
            <person name="Greeske G."/>
            <person name="Engel W."/>
        </authorList>
    </citation>
    <scope>NUCLEOTIDE SEQUENCE [GENOMIC DNA]</scope>
</reference>
<reference key="2">
    <citation type="journal article" date="1989" name="Genomics">
        <title>Chromosomal localization and structure of the human P1 protamine gene.</title>
        <authorList>
            <person name="Krawetz S.A."/>
            <person name="Herfort M.H."/>
            <person name="Hamerton J.L."/>
            <person name="Pon R.T."/>
            <person name="Dixon G.H."/>
        </authorList>
    </citation>
    <scope>NUCLEOTIDE SEQUENCE [GENOMIC DNA]</scope>
</reference>
<reference key="3">
    <citation type="journal article" date="1987" name="Nucleic Acids Res.">
        <title>The nucleotide sequence of a human protamine 1 cDNA.</title>
        <authorList>
            <person name="Lee C.-H."/>
            <person name="Hoyer-Fender S."/>
            <person name="Engel W."/>
        </authorList>
    </citation>
    <scope>NUCLEOTIDE SEQUENCE [MRNA]</scope>
</reference>
<reference key="4">
    <citation type="journal article" date="1994" name="J. Biol. Chem.">
        <title>Characterization of a human locus in transition.</title>
        <authorList>
            <person name="Nelson J.E."/>
            <person name="Krawetz S.A."/>
        </authorList>
    </citation>
    <scope>NUCLEOTIDE SEQUENCE [GENOMIC DNA]</scope>
</reference>
<reference key="5">
    <citation type="journal article" date="1993" name="J. Forensic Sci.">
        <title>Direct sequencing of the human protamine P1 gene and application in forensic medicine.</title>
        <authorList>
            <person name="Queralt R."/>
            <person name="de Fabregues-Boixar O."/>
            <person name="Adroer R."/>
            <person name="Gene M."/>
            <person name="Gomez-Catalan J."/>
            <person name="Huguet E."/>
            <person name="Oliva R."/>
        </authorList>
    </citation>
    <scope>NUCLEOTIDE SEQUENCE [GENOMIC DNA]</scope>
</reference>
<reference key="6">
    <citation type="journal article" date="2000" name="Nature">
        <title>Rapid evolution of male reproductive genes in the descent of man.</title>
        <authorList>
            <person name="Wyckoff G.J."/>
            <person name="Wang W."/>
            <person name="Wu C.-I."/>
        </authorList>
    </citation>
    <scope>NUCLEOTIDE SEQUENCE [GENOMIC DNA]</scope>
</reference>
<reference key="7">
    <citation type="submission" date="2003-05" db="EMBL/GenBank/DDBJ databases">
        <title>Cloning of human full-length CDSs in BD Creator(TM) system donor vector.</title>
        <authorList>
            <person name="Kalnine N."/>
            <person name="Chen X."/>
            <person name="Rolfs A."/>
            <person name="Halleck A."/>
            <person name="Hines L."/>
            <person name="Eisenstein S."/>
            <person name="Koundinya M."/>
            <person name="Raphael J."/>
            <person name="Moreira D."/>
            <person name="Kelley T."/>
            <person name="LaBaer J."/>
            <person name="Lin Y."/>
            <person name="Phelan M."/>
            <person name="Farmer A."/>
        </authorList>
    </citation>
    <scope>NUCLEOTIDE SEQUENCE [LARGE SCALE MRNA]</scope>
</reference>
<reference key="8">
    <citation type="journal article" date="2004" name="Genome Res.">
        <title>The status, quality, and expansion of the NIH full-length cDNA project: the Mammalian Gene Collection (MGC).</title>
        <authorList>
            <consortium name="The MGC Project Team"/>
        </authorList>
    </citation>
    <scope>NUCLEOTIDE SEQUENCE [LARGE SCALE MRNA]</scope>
    <source>
        <tissue>Testis</tissue>
    </source>
</reference>
<reference key="9">
    <citation type="journal article" date="1985" name="Biosci. Rep.">
        <title>The amino acid sequence of human sperm protamine P1.</title>
        <authorList>
            <person name="McKay D.J."/>
            <person name="Renaux B.S."/>
            <person name="Dixon G.H."/>
        </authorList>
    </citation>
    <scope>PROTEIN SEQUENCE OF 2-51</scope>
</reference>
<reference key="10">
    <citation type="journal article" date="1986" name="Biol. Chem. Hoppe-Seyler">
        <title>Isolation and amino-acid sequence analysis of human sperm protamines P1 and P2. Occurrence of two forms of protamine P2.</title>
        <authorList>
            <person name="Ammer H."/>
            <person name="Henschen A."/>
            <person name="Lee C.-H."/>
        </authorList>
    </citation>
    <scope>PROTEIN SEQUENCE OF 2-51</scope>
</reference>
<reference key="11">
    <citation type="journal article" date="1999" name="Nucleic Acids Res.">
        <title>SR protein-specific kinase 1 is highly expressed in testis and phosphorylates protamine 1.</title>
        <authorList>
            <person name="Papoutsopoulou S."/>
            <person name="Nikolakaki E."/>
            <person name="Chalepakis G."/>
            <person name="Kruft V."/>
            <person name="Chevaillier P."/>
            <person name="Giannakouros T."/>
        </authorList>
    </citation>
    <scope>PHOSPHORYLATION BY SRPK1</scope>
</reference>
<dbReference type="EMBL" id="Z46940">
    <property type="protein sequence ID" value="CAA87065.1"/>
    <property type="molecule type" value="Genomic_DNA"/>
</dbReference>
<dbReference type="EMBL" id="M60331">
    <property type="protein sequence ID" value="AAA63249.1"/>
    <property type="molecule type" value="Genomic_DNA"/>
</dbReference>
<dbReference type="EMBL" id="M29706">
    <property type="protein sequence ID" value="AAA60191.1"/>
    <property type="molecule type" value="Genomic_DNA"/>
</dbReference>
<dbReference type="EMBL" id="Y00443">
    <property type="protein sequence ID" value="CAA68499.1"/>
    <property type="molecule type" value="mRNA"/>
</dbReference>
<dbReference type="EMBL" id="U15422">
    <property type="protein sequence ID" value="AAC50486.1"/>
    <property type="molecule type" value="Genomic_DNA"/>
</dbReference>
<dbReference type="EMBL" id="S68144">
    <property type="protein sequence ID" value="AAB29321.2"/>
    <property type="molecule type" value="Genomic_DNA"/>
</dbReference>
<dbReference type="EMBL" id="AF215707">
    <property type="protein sequence ID" value="AAF34620.1"/>
    <property type="molecule type" value="Genomic_DNA"/>
</dbReference>
<dbReference type="EMBL" id="BT006746">
    <property type="protein sequence ID" value="AAP35392.1"/>
    <property type="molecule type" value="mRNA"/>
</dbReference>
<dbReference type="EMBL" id="BC003673">
    <property type="protein sequence ID" value="AAH03673.1"/>
    <property type="molecule type" value="mRNA"/>
</dbReference>
<dbReference type="CCDS" id="CCDS10547.1"/>
<dbReference type="PIR" id="A38515">
    <property type="entry name" value="HSHUP1"/>
</dbReference>
<dbReference type="RefSeq" id="NP_002752.1">
    <property type="nucleotide sequence ID" value="NM_002761.3"/>
</dbReference>
<dbReference type="BioGRID" id="111604">
    <property type="interactions" value="2"/>
</dbReference>
<dbReference type="FunCoup" id="P04553">
    <property type="interactions" value="4"/>
</dbReference>
<dbReference type="IntAct" id="P04553">
    <property type="interactions" value="1"/>
</dbReference>
<dbReference type="STRING" id="9606.ENSP00000310515"/>
<dbReference type="iPTMnet" id="P04553"/>
<dbReference type="PhosphoSitePlus" id="P04553"/>
<dbReference type="BioMuta" id="PRM1"/>
<dbReference type="DMDM" id="123691"/>
<dbReference type="PaxDb" id="9606-ENSP00000310515"/>
<dbReference type="ProteomicsDB" id="51716"/>
<dbReference type="Antibodypedia" id="24690">
    <property type="antibodies" value="64 antibodies from 12 providers"/>
</dbReference>
<dbReference type="DNASU" id="5619"/>
<dbReference type="Ensembl" id="ENST00000312511.4">
    <property type="protein sequence ID" value="ENSP00000310515.3"/>
    <property type="gene ID" value="ENSG00000175646.4"/>
</dbReference>
<dbReference type="GeneID" id="5619"/>
<dbReference type="KEGG" id="hsa:5619"/>
<dbReference type="MANE-Select" id="ENST00000312511.4">
    <property type="protein sequence ID" value="ENSP00000310515.3"/>
    <property type="RefSeq nucleotide sequence ID" value="NM_002761.3"/>
    <property type="RefSeq protein sequence ID" value="NP_002752.1"/>
</dbReference>
<dbReference type="AGR" id="HGNC:9447"/>
<dbReference type="CTD" id="5619"/>
<dbReference type="DisGeNET" id="5619"/>
<dbReference type="GeneCards" id="PRM1"/>
<dbReference type="HGNC" id="HGNC:9447">
    <property type="gene designation" value="PRM1"/>
</dbReference>
<dbReference type="HPA" id="ENSG00000175646">
    <property type="expression patterns" value="Tissue enriched (testis)"/>
</dbReference>
<dbReference type="MIM" id="182880">
    <property type="type" value="gene"/>
</dbReference>
<dbReference type="neXtProt" id="NX_P04553"/>
<dbReference type="OpenTargets" id="ENSG00000175646"/>
<dbReference type="PharmGKB" id="PA33792"/>
<dbReference type="VEuPathDB" id="HostDB:ENSG00000175646"/>
<dbReference type="GeneTree" id="ENSGT00950000184850"/>
<dbReference type="HOGENOM" id="CLU_214580_2_0_1"/>
<dbReference type="InParanoid" id="P04553"/>
<dbReference type="OMA" id="MARYICC"/>
<dbReference type="PAN-GO" id="P04553">
    <property type="GO annotations" value="0 GO annotations based on evolutionary models"/>
</dbReference>
<dbReference type="PathwayCommons" id="P04553"/>
<dbReference type="Reactome" id="R-HSA-9821993">
    <property type="pathway name" value="Replacement of protamines by nucleosomes in the male pronucleus"/>
</dbReference>
<dbReference type="SignaLink" id="P04553"/>
<dbReference type="BioGRID-ORCS" id="5619">
    <property type="hits" value="11 hits in 1136 CRISPR screens"/>
</dbReference>
<dbReference type="CD-CODE" id="91857CE7">
    <property type="entry name" value="Nucleolus"/>
</dbReference>
<dbReference type="ChiTaRS" id="PRM1">
    <property type="organism name" value="human"/>
</dbReference>
<dbReference type="GenomeRNAi" id="5619"/>
<dbReference type="Pharos" id="P04553">
    <property type="development level" value="Tbio"/>
</dbReference>
<dbReference type="PRO" id="PR:P04553"/>
<dbReference type="Proteomes" id="UP000005640">
    <property type="component" value="Chromosome 16"/>
</dbReference>
<dbReference type="RNAct" id="P04553">
    <property type="molecule type" value="protein"/>
</dbReference>
<dbReference type="Bgee" id="ENSG00000175646">
    <property type="expression patterns" value="Expressed in sperm and 94 other cell types or tissues"/>
</dbReference>
<dbReference type="ExpressionAtlas" id="P04553">
    <property type="expression patterns" value="baseline and differential"/>
</dbReference>
<dbReference type="GO" id="GO:0005829">
    <property type="term" value="C:cytosol"/>
    <property type="evidence" value="ECO:0000314"/>
    <property type="project" value="HPA"/>
</dbReference>
<dbReference type="GO" id="GO:0005654">
    <property type="term" value="C:nucleoplasm"/>
    <property type="evidence" value="ECO:0000314"/>
    <property type="project" value="HPA"/>
</dbReference>
<dbReference type="GO" id="GO:0000786">
    <property type="term" value="C:nucleosome"/>
    <property type="evidence" value="ECO:0007669"/>
    <property type="project" value="UniProtKB-KW"/>
</dbReference>
<dbReference type="GO" id="GO:0003677">
    <property type="term" value="F:DNA binding"/>
    <property type="evidence" value="ECO:0000304"/>
    <property type="project" value="ProtInc"/>
</dbReference>
<dbReference type="GO" id="GO:0030261">
    <property type="term" value="P:chromosome condensation"/>
    <property type="evidence" value="ECO:0007669"/>
    <property type="project" value="UniProtKB-KW"/>
</dbReference>
<dbReference type="GO" id="GO:0051276">
    <property type="term" value="P:chromosome organization"/>
    <property type="evidence" value="ECO:0000304"/>
    <property type="project" value="ProtInc"/>
</dbReference>
<dbReference type="GO" id="GO:0035092">
    <property type="term" value="P:sperm DNA condensation"/>
    <property type="evidence" value="ECO:0007669"/>
    <property type="project" value="InterPro"/>
</dbReference>
<dbReference type="GO" id="GO:0007283">
    <property type="term" value="P:spermatogenesis"/>
    <property type="evidence" value="ECO:0000304"/>
    <property type="project" value="ProtInc"/>
</dbReference>
<dbReference type="InterPro" id="IPR000221">
    <property type="entry name" value="Protamine_P1"/>
</dbReference>
<dbReference type="Pfam" id="PF00260">
    <property type="entry name" value="Protamine_P1"/>
    <property type="match status" value="1"/>
</dbReference>
<dbReference type="PROSITE" id="PS00048">
    <property type="entry name" value="PROTAMINE_P1"/>
    <property type="match status" value="1"/>
</dbReference>